<feature type="chain" id="PRO_1000049463" description="Glycerol-3-phosphate acyltransferase">
    <location>
        <begin position="1"/>
        <end position="807"/>
    </location>
</feature>
<feature type="short sequence motif" description="HXXXXD motif">
    <location>
        <begin position="308"/>
        <end position="313"/>
    </location>
</feature>
<sequence length="807" mass="91375">MPKQDSLWLKSLRWIQKHLVHTIVVPQDPFADLNLDTSRPLAYVMKTESLSDIAALSEVTEKLGLPSPYEPLVVNGVVAPRVVCLQGRKPLFGERAGNEPFLECFMRLLAVHKERPELDIQLVPVSLYWGRTPGKEDDTMKAAVLERENPTWLRKCFMILFLGRHNFVQFSNAVSLRYMADEHGTDMGIAHKLARVARVHFRRQRKVMTGPLLPNRQALFDSLLKSESLRKAIQEEAVSKKISETQSRETAIEYLDEIAANYSDSLVRIAERFLTWLWNKLYSGINIKGAEHIRQLHHDGHEIVYVPCHRSHMDYLLLSYILYYQGMVPPHIAAGINLNFWPAGPLFRRGGAFFIRRSFNGNKLYTAVFREYLDQLFAKGYSVEYFSEGGRSRTGRLLAPKTGMIAMTMNSVLRGIERPVTLVPVYLGYDHVMEVATYHKELSGKKKQKESVWQVFGAIRKLGNFGQGYVNFGEPITLQTFLNEMAPNWRAELADDPEQKPTWLTPAVNVLANRVMTRINDAAAASSVTLTSLALLASEQNALERCLLERQLDLYLTLLKRVPYTSFTSVAEGDGKHLVQQGIDLNKFSVSSDPLGEIVSIDANQAISMTYYRNNIIHLFIIPSLIASCLTHNEQSQRQQIVAIVNDFYPLLKAELFMGIKDIPSYVNQVLDLFIEQGLITESDNLSVVTEHSSQLVLLSGSVSETLQRYAIIFNLLAHRPKMERSELESESHLLAQRLGALHGITAPEFYDKKLYGTLSVKLKELGYLSDKDDKSDVKRIRDQANSLLRASVRQTIVASVTAEHIS</sequence>
<name>PLSB_SHESW</name>
<accession>A1RE94</accession>
<gene>
    <name evidence="1" type="primary">plsB</name>
    <name type="ordered locus">Sputw3181_0136</name>
</gene>
<organism>
    <name type="scientific">Shewanella sp. (strain W3-18-1)</name>
    <dbReference type="NCBI Taxonomy" id="351745"/>
    <lineage>
        <taxon>Bacteria</taxon>
        <taxon>Pseudomonadati</taxon>
        <taxon>Pseudomonadota</taxon>
        <taxon>Gammaproteobacteria</taxon>
        <taxon>Alteromonadales</taxon>
        <taxon>Shewanellaceae</taxon>
        <taxon>Shewanella</taxon>
    </lineage>
</organism>
<dbReference type="EC" id="2.3.1.15" evidence="1"/>
<dbReference type="EMBL" id="CP000503">
    <property type="protein sequence ID" value="ABM22989.1"/>
    <property type="molecule type" value="Genomic_DNA"/>
</dbReference>
<dbReference type="RefSeq" id="WP_011787556.1">
    <property type="nucleotide sequence ID" value="NC_008750.1"/>
</dbReference>
<dbReference type="SMR" id="A1RE94"/>
<dbReference type="KEGG" id="shw:Sputw3181_0136"/>
<dbReference type="HOGENOM" id="CLU_015407_0_0_6"/>
<dbReference type="UniPathway" id="UPA00557">
    <property type="reaction ID" value="UER00612"/>
</dbReference>
<dbReference type="Proteomes" id="UP000002597">
    <property type="component" value="Chromosome"/>
</dbReference>
<dbReference type="GO" id="GO:0005886">
    <property type="term" value="C:plasma membrane"/>
    <property type="evidence" value="ECO:0007669"/>
    <property type="project" value="UniProtKB-SubCell"/>
</dbReference>
<dbReference type="GO" id="GO:0004366">
    <property type="term" value="F:glycerol-3-phosphate O-acyltransferase activity"/>
    <property type="evidence" value="ECO:0007669"/>
    <property type="project" value="UniProtKB-UniRule"/>
</dbReference>
<dbReference type="GO" id="GO:0016024">
    <property type="term" value="P:CDP-diacylglycerol biosynthetic process"/>
    <property type="evidence" value="ECO:0007669"/>
    <property type="project" value="UniProtKB-UniRule"/>
</dbReference>
<dbReference type="GO" id="GO:0006631">
    <property type="term" value="P:fatty acid metabolic process"/>
    <property type="evidence" value="ECO:0007669"/>
    <property type="project" value="TreeGrafter"/>
</dbReference>
<dbReference type="CDD" id="cd07993">
    <property type="entry name" value="LPLAT_DHAPAT-like"/>
    <property type="match status" value="1"/>
</dbReference>
<dbReference type="HAMAP" id="MF_00393">
    <property type="entry name" value="Glyc3P_acyltrans"/>
    <property type="match status" value="1"/>
</dbReference>
<dbReference type="InterPro" id="IPR022284">
    <property type="entry name" value="GPAT/DHAPAT"/>
</dbReference>
<dbReference type="InterPro" id="IPR045520">
    <property type="entry name" value="GPAT/DHAPAT_C"/>
</dbReference>
<dbReference type="InterPro" id="IPR041728">
    <property type="entry name" value="GPAT/DHAPAT_LPLAT"/>
</dbReference>
<dbReference type="InterPro" id="IPR028354">
    <property type="entry name" value="GPAT_PlsB"/>
</dbReference>
<dbReference type="InterPro" id="IPR002123">
    <property type="entry name" value="Plipid/glycerol_acylTrfase"/>
</dbReference>
<dbReference type="NCBIfam" id="TIGR03703">
    <property type="entry name" value="plsB"/>
    <property type="match status" value="1"/>
</dbReference>
<dbReference type="NCBIfam" id="NF003441">
    <property type="entry name" value="PRK04974.1"/>
    <property type="match status" value="1"/>
</dbReference>
<dbReference type="PANTHER" id="PTHR12563:SF17">
    <property type="entry name" value="DIHYDROXYACETONE PHOSPHATE ACYLTRANSFERASE"/>
    <property type="match status" value="1"/>
</dbReference>
<dbReference type="PANTHER" id="PTHR12563">
    <property type="entry name" value="GLYCEROL-3-PHOSPHATE ACYLTRANSFERASE"/>
    <property type="match status" value="1"/>
</dbReference>
<dbReference type="Pfam" id="PF01553">
    <property type="entry name" value="Acyltransferase"/>
    <property type="match status" value="1"/>
</dbReference>
<dbReference type="Pfam" id="PF19277">
    <property type="entry name" value="GPAT_C"/>
    <property type="match status" value="1"/>
</dbReference>
<dbReference type="PIRSF" id="PIRSF500064">
    <property type="entry name" value="GPAT"/>
    <property type="match status" value="1"/>
</dbReference>
<dbReference type="PIRSF" id="PIRSF000437">
    <property type="entry name" value="GPAT_DHAPAT"/>
    <property type="match status" value="1"/>
</dbReference>
<dbReference type="SMART" id="SM00563">
    <property type="entry name" value="PlsC"/>
    <property type="match status" value="1"/>
</dbReference>
<dbReference type="SUPFAM" id="SSF69593">
    <property type="entry name" value="Glycerol-3-phosphate (1)-acyltransferase"/>
    <property type="match status" value="1"/>
</dbReference>
<reference key="1">
    <citation type="submission" date="2006-12" db="EMBL/GenBank/DDBJ databases">
        <title>Complete sequence of Shewanella sp. W3-18-1.</title>
        <authorList>
            <consortium name="US DOE Joint Genome Institute"/>
            <person name="Copeland A."/>
            <person name="Lucas S."/>
            <person name="Lapidus A."/>
            <person name="Barry K."/>
            <person name="Detter J.C."/>
            <person name="Glavina del Rio T."/>
            <person name="Hammon N."/>
            <person name="Israni S."/>
            <person name="Dalin E."/>
            <person name="Tice H."/>
            <person name="Pitluck S."/>
            <person name="Chain P."/>
            <person name="Malfatti S."/>
            <person name="Shin M."/>
            <person name="Vergez L."/>
            <person name="Schmutz J."/>
            <person name="Larimer F."/>
            <person name="Land M."/>
            <person name="Hauser L."/>
            <person name="Kyrpides N."/>
            <person name="Lykidis A."/>
            <person name="Tiedje J."/>
            <person name="Richardson P."/>
        </authorList>
    </citation>
    <scope>NUCLEOTIDE SEQUENCE [LARGE SCALE GENOMIC DNA]</scope>
    <source>
        <strain>W3-18-1</strain>
    </source>
</reference>
<keyword id="KW-0012">Acyltransferase</keyword>
<keyword id="KW-0997">Cell inner membrane</keyword>
<keyword id="KW-1003">Cell membrane</keyword>
<keyword id="KW-0444">Lipid biosynthesis</keyword>
<keyword id="KW-0443">Lipid metabolism</keyword>
<keyword id="KW-0472">Membrane</keyword>
<keyword id="KW-0594">Phospholipid biosynthesis</keyword>
<keyword id="KW-1208">Phospholipid metabolism</keyword>
<keyword id="KW-0808">Transferase</keyword>
<evidence type="ECO:0000255" key="1">
    <source>
        <dbReference type="HAMAP-Rule" id="MF_00393"/>
    </source>
</evidence>
<protein>
    <recommendedName>
        <fullName evidence="1">Glycerol-3-phosphate acyltransferase</fullName>
        <shortName evidence="1">GPAT</shortName>
        <ecNumber evidence="1">2.3.1.15</ecNumber>
    </recommendedName>
</protein>
<proteinExistence type="inferred from homology"/>
<comment type="catalytic activity">
    <reaction evidence="1">
        <text>sn-glycerol 3-phosphate + an acyl-CoA = a 1-acyl-sn-glycero-3-phosphate + CoA</text>
        <dbReference type="Rhea" id="RHEA:15325"/>
        <dbReference type="ChEBI" id="CHEBI:57287"/>
        <dbReference type="ChEBI" id="CHEBI:57597"/>
        <dbReference type="ChEBI" id="CHEBI:57970"/>
        <dbReference type="ChEBI" id="CHEBI:58342"/>
        <dbReference type="EC" id="2.3.1.15"/>
    </reaction>
</comment>
<comment type="pathway">
    <text evidence="1">Phospholipid metabolism; CDP-diacylglycerol biosynthesis; CDP-diacylglycerol from sn-glycerol 3-phosphate: step 1/3.</text>
</comment>
<comment type="subcellular location">
    <subcellularLocation>
        <location evidence="1">Cell inner membrane</location>
        <topology evidence="1">Peripheral membrane protein</topology>
        <orientation evidence="1">Cytoplasmic side</orientation>
    </subcellularLocation>
</comment>
<comment type="domain">
    <text evidence="1">The HXXXXD motif is essential for acyltransferase activity and may constitute the binding site for the phosphate moiety of the glycerol-3-phosphate.</text>
</comment>
<comment type="similarity">
    <text evidence="1">Belongs to the GPAT/DAPAT family.</text>
</comment>